<protein>
    <recommendedName>
        <fullName evidence="1">Translation initiation factor IF-1 2</fullName>
    </recommendedName>
</protein>
<gene>
    <name evidence="1" type="primary">infA2</name>
    <name type="ordered locus">Bxeno_B1920</name>
    <name type="ORF">Bxe_B1067</name>
</gene>
<name>IF12_PARXL</name>
<keyword id="KW-0963">Cytoplasm</keyword>
<keyword id="KW-0396">Initiation factor</keyword>
<keyword id="KW-0648">Protein biosynthesis</keyword>
<keyword id="KW-1185">Reference proteome</keyword>
<keyword id="KW-0694">RNA-binding</keyword>
<keyword id="KW-0699">rRNA-binding</keyword>
<organism>
    <name type="scientific">Paraburkholderia xenovorans (strain LB400)</name>
    <dbReference type="NCBI Taxonomy" id="266265"/>
    <lineage>
        <taxon>Bacteria</taxon>
        <taxon>Pseudomonadati</taxon>
        <taxon>Pseudomonadota</taxon>
        <taxon>Betaproteobacteria</taxon>
        <taxon>Burkholderiales</taxon>
        <taxon>Burkholderiaceae</taxon>
        <taxon>Paraburkholderia</taxon>
    </lineage>
</organism>
<dbReference type="EMBL" id="CP000271">
    <property type="protein sequence ID" value="ABE34888.1"/>
    <property type="molecule type" value="Genomic_DNA"/>
</dbReference>
<dbReference type="SMR" id="Q13M01"/>
<dbReference type="STRING" id="266265.Bxe_B1067"/>
<dbReference type="KEGG" id="bxb:DR64_6387"/>
<dbReference type="KEGG" id="bxe:Bxe_B1067"/>
<dbReference type="eggNOG" id="COG0361">
    <property type="taxonomic scope" value="Bacteria"/>
</dbReference>
<dbReference type="OrthoDB" id="9803250at2"/>
<dbReference type="Proteomes" id="UP000001817">
    <property type="component" value="Chromosome 2"/>
</dbReference>
<dbReference type="GO" id="GO:0005829">
    <property type="term" value="C:cytosol"/>
    <property type="evidence" value="ECO:0007669"/>
    <property type="project" value="TreeGrafter"/>
</dbReference>
<dbReference type="GO" id="GO:0043022">
    <property type="term" value="F:ribosome binding"/>
    <property type="evidence" value="ECO:0007669"/>
    <property type="project" value="UniProtKB-UniRule"/>
</dbReference>
<dbReference type="GO" id="GO:0019843">
    <property type="term" value="F:rRNA binding"/>
    <property type="evidence" value="ECO:0007669"/>
    <property type="project" value="UniProtKB-UniRule"/>
</dbReference>
<dbReference type="GO" id="GO:0003743">
    <property type="term" value="F:translation initiation factor activity"/>
    <property type="evidence" value="ECO:0007669"/>
    <property type="project" value="UniProtKB-UniRule"/>
</dbReference>
<dbReference type="CDD" id="cd04451">
    <property type="entry name" value="S1_IF1"/>
    <property type="match status" value="1"/>
</dbReference>
<dbReference type="FunFam" id="2.40.50.140:FF:000002">
    <property type="entry name" value="Translation initiation factor IF-1"/>
    <property type="match status" value="1"/>
</dbReference>
<dbReference type="Gene3D" id="2.40.50.140">
    <property type="entry name" value="Nucleic acid-binding proteins"/>
    <property type="match status" value="1"/>
</dbReference>
<dbReference type="HAMAP" id="MF_00075">
    <property type="entry name" value="IF_1"/>
    <property type="match status" value="1"/>
</dbReference>
<dbReference type="InterPro" id="IPR012340">
    <property type="entry name" value="NA-bd_OB-fold"/>
</dbReference>
<dbReference type="InterPro" id="IPR006196">
    <property type="entry name" value="RNA-binding_domain_S1_IF1"/>
</dbReference>
<dbReference type="InterPro" id="IPR004368">
    <property type="entry name" value="TIF_IF1"/>
</dbReference>
<dbReference type="NCBIfam" id="TIGR00008">
    <property type="entry name" value="infA"/>
    <property type="match status" value="1"/>
</dbReference>
<dbReference type="PANTHER" id="PTHR33370">
    <property type="entry name" value="TRANSLATION INITIATION FACTOR IF-1, CHLOROPLASTIC"/>
    <property type="match status" value="1"/>
</dbReference>
<dbReference type="PANTHER" id="PTHR33370:SF1">
    <property type="entry name" value="TRANSLATION INITIATION FACTOR IF-1, CHLOROPLASTIC"/>
    <property type="match status" value="1"/>
</dbReference>
<dbReference type="Pfam" id="PF01176">
    <property type="entry name" value="eIF-1a"/>
    <property type="match status" value="1"/>
</dbReference>
<dbReference type="SUPFAM" id="SSF50249">
    <property type="entry name" value="Nucleic acid-binding proteins"/>
    <property type="match status" value="1"/>
</dbReference>
<dbReference type="PROSITE" id="PS50832">
    <property type="entry name" value="S1_IF1_TYPE"/>
    <property type="match status" value="1"/>
</dbReference>
<sequence length="90" mass="10158">MAKEELLELDGIVDEVLPDSRYRVTLDNGVVVGAYASGRMRKNHIRILAGDRVTLELSVYDLTKGRINFRHKDERATGGGGARNSQFRRR</sequence>
<accession>Q13M01</accession>
<evidence type="ECO:0000255" key="1">
    <source>
        <dbReference type="HAMAP-Rule" id="MF_00075"/>
    </source>
</evidence>
<proteinExistence type="inferred from homology"/>
<reference key="1">
    <citation type="journal article" date="2006" name="Proc. Natl. Acad. Sci. U.S.A.">
        <title>Burkholderia xenovorans LB400 harbors a multi-replicon, 9.73-Mbp genome shaped for versatility.</title>
        <authorList>
            <person name="Chain P.S.G."/>
            <person name="Denef V.J."/>
            <person name="Konstantinidis K.T."/>
            <person name="Vergez L.M."/>
            <person name="Agullo L."/>
            <person name="Reyes V.L."/>
            <person name="Hauser L."/>
            <person name="Cordova M."/>
            <person name="Gomez L."/>
            <person name="Gonzalez M."/>
            <person name="Land M."/>
            <person name="Lao V."/>
            <person name="Larimer F."/>
            <person name="LiPuma J.J."/>
            <person name="Mahenthiralingam E."/>
            <person name="Malfatti S.A."/>
            <person name="Marx C.J."/>
            <person name="Parnell J.J."/>
            <person name="Ramette A."/>
            <person name="Richardson P."/>
            <person name="Seeger M."/>
            <person name="Smith D."/>
            <person name="Spilker T."/>
            <person name="Sul W.J."/>
            <person name="Tsoi T.V."/>
            <person name="Ulrich L.E."/>
            <person name="Zhulin I.B."/>
            <person name="Tiedje J.M."/>
        </authorList>
    </citation>
    <scope>NUCLEOTIDE SEQUENCE [LARGE SCALE GENOMIC DNA]</scope>
    <source>
        <strain>LB400</strain>
    </source>
</reference>
<feature type="chain" id="PRO_0000263779" description="Translation initiation factor IF-1 2">
    <location>
        <begin position="1"/>
        <end position="90"/>
    </location>
</feature>
<feature type="domain" description="S1-like" evidence="1">
    <location>
        <begin position="1"/>
        <end position="72"/>
    </location>
</feature>
<comment type="function">
    <text evidence="1">One of the essential components for the initiation of protein synthesis. Stabilizes the binding of IF-2 and IF-3 on the 30S subunit to which N-formylmethionyl-tRNA(fMet) subsequently binds. Helps modulate mRNA selection, yielding the 30S pre-initiation complex (PIC). Upon addition of the 50S ribosomal subunit IF-1, IF-2 and IF-3 are released leaving the mature 70S translation initiation complex.</text>
</comment>
<comment type="subunit">
    <text evidence="1">Component of the 30S ribosomal translation pre-initiation complex which assembles on the 30S ribosome in the order IF-2 and IF-3, IF-1 and N-formylmethionyl-tRNA(fMet); mRNA recruitment can occur at any time during PIC assembly.</text>
</comment>
<comment type="subcellular location">
    <subcellularLocation>
        <location evidence="1">Cytoplasm</location>
    </subcellularLocation>
</comment>
<comment type="similarity">
    <text evidence="1">Belongs to the IF-1 family.</text>
</comment>